<proteinExistence type="inferred from homology"/>
<dbReference type="EC" id="2.4.2.29" evidence="1"/>
<dbReference type="EMBL" id="CP001164">
    <property type="protein sequence ID" value="ACI38297.1"/>
    <property type="molecule type" value="Genomic_DNA"/>
</dbReference>
<dbReference type="RefSeq" id="WP_000667319.1">
    <property type="nucleotide sequence ID" value="NC_011353.1"/>
</dbReference>
<dbReference type="SMR" id="B5Z2W2"/>
<dbReference type="GeneID" id="93777054"/>
<dbReference type="KEGG" id="ecf:ECH74115_0486"/>
<dbReference type="HOGENOM" id="CLU_022060_0_1_6"/>
<dbReference type="UniPathway" id="UPA00392"/>
<dbReference type="GO" id="GO:0005829">
    <property type="term" value="C:cytosol"/>
    <property type="evidence" value="ECO:0007669"/>
    <property type="project" value="TreeGrafter"/>
</dbReference>
<dbReference type="GO" id="GO:0046872">
    <property type="term" value="F:metal ion binding"/>
    <property type="evidence" value="ECO:0007669"/>
    <property type="project" value="UniProtKB-KW"/>
</dbReference>
<dbReference type="GO" id="GO:0008479">
    <property type="term" value="F:tRNA-guanosine(34) queuine transglycosylase activity"/>
    <property type="evidence" value="ECO:0007669"/>
    <property type="project" value="UniProtKB-UniRule"/>
</dbReference>
<dbReference type="GO" id="GO:0008616">
    <property type="term" value="P:queuosine biosynthetic process"/>
    <property type="evidence" value="ECO:0007669"/>
    <property type="project" value="UniProtKB-UniRule"/>
</dbReference>
<dbReference type="GO" id="GO:0002099">
    <property type="term" value="P:tRNA wobble guanine modification"/>
    <property type="evidence" value="ECO:0007669"/>
    <property type="project" value="TreeGrafter"/>
</dbReference>
<dbReference type="GO" id="GO:0101030">
    <property type="term" value="P:tRNA-guanine transglycosylation"/>
    <property type="evidence" value="ECO:0007669"/>
    <property type="project" value="InterPro"/>
</dbReference>
<dbReference type="FunFam" id="3.20.20.105:FF:000001">
    <property type="entry name" value="Queuine tRNA-ribosyltransferase"/>
    <property type="match status" value="1"/>
</dbReference>
<dbReference type="Gene3D" id="3.20.20.105">
    <property type="entry name" value="Queuine tRNA-ribosyltransferase-like"/>
    <property type="match status" value="1"/>
</dbReference>
<dbReference type="HAMAP" id="MF_00168">
    <property type="entry name" value="Q_tRNA_Tgt"/>
    <property type="match status" value="1"/>
</dbReference>
<dbReference type="InterPro" id="IPR050076">
    <property type="entry name" value="ArchSynthase1/Queuine_TRR"/>
</dbReference>
<dbReference type="InterPro" id="IPR004803">
    <property type="entry name" value="TGT"/>
</dbReference>
<dbReference type="InterPro" id="IPR036511">
    <property type="entry name" value="TGT-like_sf"/>
</dbReference>
<dbReference type="InterPro" id="IPR002616">
    <property type="entry name" value="tRNA_ribo_trans-like"/>
</dbReference>
<dbReference type="NCBIfam" id="TIGR00430">
    <property type="entry name" value="Q_tRNA_tgt"/>
    <property type="match status" value="1"/>
</dbReference>
<dbReference type="NCBIfam" id="TIGR00449">
    <property type="entry name" value="tgt_general"/>
    <property type="match status" value="1"/>
</dbReference>
<dbReference type="PANTHER" id="PTHR46499">
    <property type="entry name" value="QUEUINE TRNA-RIBOSYLTRANSFERASE"/>
    <property type="match status" value="1"/>
</dbReference>
<dbReference type="PANTHER" id="PTHR46499:SF1">
    <property type="entry name" value="QUEUINE TRNA-RIBOSYLTRANSFERASE"/>
    <property type="match status" value="1"/>
</dbReference>
<dbReference type="Pfam" id="PF01702">
    <property type="entry name" value="TGT"/>
    <property type="match status" value="1"/>
</dbReference>
<dbReference type="SUPFAM" id="SSF51713">
    <property type="entry name" value="tRNA-guanine transglycosylase"/>
    <property type="match status" value="1"/>
</dbReference>
<accession>B5Z2W2</accession>
<reference key="1">
    <citation type="journal article" date="2011" name="Proc. Natl. Acad. Sci. U.S.A.">
        <title>Genomic anatomy of Escherichia coli O157:H7 outbreaks.</title>
        <authorList>
            <person name="Eppinger M."/>
            <person name="Mammel M.K."/>
            <person name="Leclerc J.E."/>
            <person name="Ravel J."/>
            <person name="Cebula T.A."/>
        </authorList>
    </citation>
    <scope>NUCLEOTIDE SEQUENCE [LARGE SCALE GENOMIC DNA]</scope>
    <source>
        <strain>EC4115 / EHEC</strain>
    </source>
</reference>
<sequence>MKFELDTTDGRARRGRLVFDRGVVETPCFMPVGTYGTVKGMTPEEVEATGAQIILGNTFHLWLRPGQEIMKLHGDLHDFMQWKGPILTDSGGFQVFSLGDIRKITEQGVHFRNPINGDPIFLDPEKSMEIQYDLGSDIVMIFDECTPYPADWDYAKRSMEMSLRWAKRSRERFDSLGNKNALFGIIQGSVYEDLRDISVKGLVDIGFDGYAVGGLAVGEPKADMHRILEHVCPQIPADKPRYLMGVGKPEDLVEGVRRGIDMFDCVMPTRNARNGHLFVTDGVVKIRNAKYKSDTGPLDPECDCYTCRNYSRAYLHHLDRCNEILGARLNTIHNLRYYQRLMAGLRKAIEEGKLESFVTDFYQRQGREVPPLNVD</sequence>
<gene>
    <name evidence="1" type="primary">tgt</name>
    <name type="ordered locus">ECH74115_0486</name>
</gene>
<keyword id="KW-0328">Glycosyltransferase</keyword>
<keyword id="KW-0479">Metal-binding</keyword>
<keyword id="KW-0671">Queuosine biosynthesis</keyword>
<keyword id="KW-0808">Transferase</keyword>
<keyword id="KW-0819">tRNA processing</keyword>
<keyword id="KW-0862">Zinc</keyword>
<organism>
    <name type="scientific">Escherichia coli O157:H7 (strain EC4115 / EHEC)</name>
    <dbReference type="NCBI Taxonomy" id="444450"/>
    <lineage>
        <taxon>Bacteria</taxon>
        <taxon>Pseudomonadati</taxon>
        <taxon>Pseudomonadota</taxon>
        <taxon>Gammaproteobacteria</taxon>
        <taxon>Enterobacterales</taxon>
        <taxon>Enterobacteriaceae</taxon>
        <taxon>Escherichia</taxon>
    </lineage>
</organism>
<name>TGT_ECO5E</name>
<feature type="chain" id="PRO_1000097541" description="Queuine tRNA-ribosyltransferase">
    <location>
        <begin position="1"/>
        <end position="375"/>
    </location>
</feature>
<feature type="region of interest" description="RNA binding" evidence="1">
    <location>
        <begin position="245"/>
        <end position="251"/>
    </location>
</feature>
<feature type="region of interest" description="RNA binding; important for wobble base 34 recognition" evidence="1">
    <location>
        <begin position="269"/>
        <end position="273"/>
    </location>
</feature>
<feature type="active site" description="Proton acceptor" evidence="1">
    <location>
        <position position="89"/>
    </location>
</feature>
<feature type="active site" description="Nucleophile" evidence="1">
    <location>
        <position position="264"/>
    </location>
</feature>
<feature type="binding site" evidence="1">
    <location>
        <begin position="89"/>
        <end position="93"/>
    </location>
    <ligand>
        <name>substrate</name>
    </ligand>
</feature>
<feature type="binding site" evidence="1">
    <location>
        <position position="143"/>
    </location>
    <ligand>
        <name>substrate</name>
    </ligand>
</feature>
<feature type="binding site" evidence="1">
    <location>
        <position position="187"/>
    </location>
    <ligand>
        <name>substrate</name>
    </ligand>
</feature>
<feature type="binding site" evidence="1">
    <location>
        <position position="214"/>
    </location>
    <ligand>
        <name>substrate</name>
    </ligand>
</feature>
<feature type="binding site" evidence="1">
    <location>
        <position position="302"/>
    </location>
    <ligand>
        <name>Zn(2+)</name>
        <dbReference type="ChEBI" id="CHEBI:29105"/>
    </ligand>
</feature>
<feature type="binding site" evidence="1">
    <location>
        <position position="304"/>
    </location>
    <ligand>
        <name>Zn(2+)</name>
        <dbReference type="ChEBI" id="CHEBI:29105"/>
    </ligand>
</feature>
<feature type="binding site" evidence="1">
    <location>
        <position position="307"/>
    </location>
    <ligand>
        <name>Zn(2+)</name>
        <dbReference type="ChEBI" id="CHEBI:29105"/>
    </ligand>
</feature>
<feature type="binding site" evidence="1">
    <location>
        <position position="333"/>
    </location>
    <ligand>
        <name>Zn(2+)</name>
        <dbReference type="ChEBI" id="CHEBI:29105"/>
    </ligand>
</feature>
<evidence type="ECO:0000255" key="1">
    <source>
        <dbReference type="HAMAP-Rule" id="MF_00168"/>
    </source>
</evidence>
<protein>
    <recommendedName>
        <fullName evidence="1">Queuine tRNA-ribosyltransferase</fullName>
        <ecNumber evidence="1">2.4.2.29</ecNumber>
    </recommendedName>
    <alternativeName>
        <fullName evidence="1">Guanine insertion enzyme</fullName>
    </alternativeName>
    <alternativeName>
        <fullName evidence="1">tRNA-guanine transglycosylase</fullName>
    </alternativeName>
</protein>
<comment type="function">
    <text evidence="1">Catalyzes the base-exchange of a guanine (G) residue with the queuine precursor 7-aminomethyl-7-deazaguanine (PreQ1) at position 34 (anticodon wobble position) in tRNAs with GU(N) anticodons (tRNA-Asp, -Asn, -His and -Tyr). Catalysis occurs through a double-displacement mechanism. The nucleophile active site attacks the C1' of nucleotide 34 to detach the guanine base from the RNA, forming a covalent enzyme-RNA intermediate. The proton acceptor active site deprotonates the incoming PreQ1, allowing a nucleophilic attack on the C1' of the ribose to form the product. After dissociation, two additional enzymatic reactions on the tRNA convert PreQ1 to queuine (Q), resulting in the hypermodified nucleoside queuosine (7-(((4,5-cis-dihydroxy-2-cyclopenten-1-yl)amino)methyl)-7-deazaguanosine).</text>
</comment>
<comment type="catalytic activity">
    <reaction evidence="1">
        <text>7-aminomethyl-7-carbaguanine + guanosine(34) in tRNA = 7-aminomethyl-7-carbaguanosine(34) in tRNA + guanine</text>
        <dbReference type="Rhea" id="RHEA:24104"/>
        <dbReference type="Rhea" id="RHEA-COMP:10341"/>
        <dbReference type="Rhea" id="RHEA-COMP:10342"/>
        <dbReference type="ChEBI" id="CHEBI:16235"/>
        <dbReference type="ChEBI" id="CHEBI:58703"/>
        <dbReference type="ChEBI" id="CHEBI:74269"/>
        <dbReference type="ChEBI" id="CHEBI:82833"/>
        <dbReference type="EC" id="2.4.2.29"/>
    </reaction>
</comment>
<comment type="cofactor">
    <cofactor evidence="1">
        <name>Zn(2+)</name>
        <dbReference type="ChEBI" id="CHEBI:29105"/>
    </cofactor>
    <text evidence="1">Binds 1 zinc ion per subunit.</text>
</comment>
<comment type="pathway">
    <text evidence="1">tRNA modification; tRNA-queuosine biosynthesis.</text>
</comment>
<comment type="subunit">
    <text evidence="1">Homodimer. Within each dimer, one monomer is responsible for RNA recognition and catalysis, while the other monomer binds to the replacement base PreQ1.</text>
</comment>
<comment type="similarity">
    <text evidence="1">Belongs to the queuine tRNA-ribosyltransferase family.</text>
</comment>